<protein>
    <recommendedName>
        <fullName evidence="1">Arginine repressor</fullName>
    </recommendedName>
</protein>
<evidence type="ECO:0000255" key="1">
    <source>
        <dbReference type="HAMAP-Rule" id="MF_00173"/>
    </source>
</evidence>
<comment type="function">
    <text evidence="1">Regulates arginine biosynthesis genes.</text>
</comment>
<comment type="pathway">
    <text>Amino-acid biosynthesis; L-arginine biosynthesis [regulation].</text>
</comment>
<comment type="subcellular location">
    <subcellularLocation>
        <location evidence="1">Cytoplasm</location>
    </subcellularLocation>
</comment>
<comment type="similarity">
    <text evidence="1">Belongs to the ArgR family.</text>
</comment>
<accession>A1AGD0</accession>
<sequence>MRSSAKQEELVKAFKALLKEEKFSSQGEIVAALQEQGFDNINQSKVSRMLTKFGAVRTRNAKMEMVYCLPAELGVPTTSSPLKNLVLDIDYNDAVVVIHTSPGAAQLIARLLDSLGKAEGILGTIAGDDTIFTTPANGFTVKELYEAILELFDQEL</sequence>
<feature type="chain" id="PRO_1000023563" description="Arginine repressor">
    <location>
        <begin position="1"/>
        <end position="156"/>
    </location>
</feature>
<dbReference type="EMBL" id="CP000468">
    <property type="protein sequence ID" value="ABJ02720.1"/>
    <property type="molecule type" value="Genomic_DNA"/>
</dbReference>
<dbReference type="RefSeq" id="WP_001257847.1">
    <property type="nucleotide sequence ID" value="NZ_CADILS010000003.1"/>
</dbReference>
<dbReference type="SMR" id="A1AGD0"/>
<dbReference type="KEGG" id="ecv:APECO1_3207"/>
<dbReference type="HOGENOM" id="CLU_097103_2_0_6"/>
<dbReference type="UniPathway" id="UPA00068"/>
<dbReference type="Proteomes" id="UP000008216">
    <property type="component" value="Chromosome"/>
</dbReference>
<dbReference type="GO" id="GO:0005737">
    <property type="term" value="C:cytoplasm"/>
    <property type="evidence" value="ECO:0007669"/>
    <property type="project" value="UniProtKB-SubCell"/>
</dbReference>
<dbReference type="GO" id="GO:0034618">
    <property type="term" value="F:arginine binding"/>
    <property type="evidence" value="ECO:0007669"/>
    <property type="project" value="InterPro"/>
</dbReference>
<dbReference type="GO" id="GO:0003677">
    <property type="term" value="F:DNA binding"/>
    <property type="evidence" value="ECO:0007669"/>
    <property type="project" value="UniProtKB-KW"/>
</dbReference>
<dbReference type="GO" id="GO:0003700">
    <property type="term" value="F:DNA-binding transcription factor activity"/>
    <property type="evidence" value="ECO:0007669"/>
    <property type="project" value="UniProtKB-UniRule"/>
</dbReference>
<dbReference type="GO" id="GO:0006526">
    <property type="term" value="P:L-arginine biosynthetic process"/>
    <property type="evidence" value="ECO:0007669"/>
    <property type="project" value="UniProtKB-UniPathway"/>
</dbReference>
<dbReference type="GO" id="GO:0051259">
    <property type="term" value="P:protein complex oligomerization"/>
    <property type="evidence" value="ECO:0007669"/>
    <property type="project" value="InterPro"/>
</dbReference>
<dbReference type="GO" id="GO:1900079">
    <property type="term" value="P:regulation of arginine biosynthetic process"/>
    <property type="evidence" value="ECO:0007669"/>
    <property type="project" value="UniProtKB-UniRule"/>
</dbReference>
<dbReference type="FunFam" id="1.10.10.10:FF:000074">
    <property type="entry name" value="Arginine repressor"/>
    <property type="match status" value="1"/>
</dbReference>
<dbReference type="FunFam" id="3.30.1360.40:FF:000004">
    <property type="entry name" value="Arginine repressor"/>
    <property type="match status" value="1"/>
</dbReference>
<dbReference type="Gene3D" id="3.30.1360.40">
    <property type="match status" value="1"/>
</dbReference>
<dbReference type="Gene3D" id="1.10.10.10">
    <property type="entry name" value="Winged helix-like DNA-binding domain superfamily/Winged helix DNA-binding domain"/>
    <property type="match status" value="1"/>
</dbReference>
<dbReference type="HAMAP" id="MF_00173">
    <property type="entry name" value="Arg_repressor"/>
    <property type="match status" value="1"/>
</dbReference>
<dbReference type="InterPro" id="IPR001669">
    <property type="entry name" value="Arg_repress"/>
</dbReference>
<dbReference type="InterPro" id="IPR020899">
    <property type="entry name" value="Arg_repress_C"/>
</dbReference>
<dbReference type="InterPro" id="IPR036251">
    <property type="entry name" value="Arg_repress_C_sf"/>
</dbReference>
<dbReference type="InterPro" id="IPR020900">
    <property type="entry name" value="Arg_repress_DNA-bd"/>
</dbReference>
<dbReference type="InterPro" id="IPR036388">
    <property type="entry name" value="WH-like_DNA-bd_sf"/>
</dbReference>
<dbReference type="InterPro" id="IPR036390">
    <property type="entry name" value="WH_DNA-bd_sf"/>
</dbReference>
<dbReference type="NCBIfam" id="TIGR01529">
    <property type="entry name" value="argR_whole"/>
    <property type="match status" value="1"/>
</dbReference>
<dbReference type="NCBIfam" id="NF003457">
    <property type="entry name" value="PRK05066.1"/>
    <property type="match status" value="1"/>
</dbReference>
<dbReference type="PANTHER" id="PTHR34471">
    <property type="entry name" value="ARGININE REPRESSOR"/>
    <property type="match status" value="1"/>
</dbReference>
<dbReference type="PANTHER" id="PTHR34471:SF1">
    <property type="entry name" value="ARGININE REPRESSOR"/>
    <property type="match status" value="1"/>
</dbReference>
<dbReference type="Pfam" id="PF01316">
    <property type="entry name" value="Arg_repressor"/>
    <property type="match status" value="1"/>
</dbReference>
<dbReference type="Pfam" id="PF02863">
    <property type="entry name" value="Arg_repressor_C"/>
    <property type="match status" value="1"/>
</dbReference>
<dbReference type="PRINTS" id="PR01467">
    <property type="entry name" value="ARGREPRESSOR"/>
</dbReference>
<dbReference type="SUPFAM" id="SSF55252">
    <property type="entry name" value="C-terminal domain of arginine repressor"/>
    <property type="match status" value="1"/>
</dbReference>
<dbReference type="SUPFAM" id="SSF46785">
    <property type="entry name" value="Winged helix' DNA-binding domain"/>
    <property type="match status" value="1"/>
</dbReference>
<organism>
    <name type="scientific">Escherichia coli O1:K1 / APEC</name>
    <dbReference type="NCBI Taxonomy" id="405955"/>
    <lineage>
        <taxon>Bacteria</taxon>
        <taxon>Pseudomonadati</taxon>
        <taxon>Pseudomonadota</taxon>
        <taxon>Gammaproteobacteria</taxon>
        <taxon>Enterobacterales</taxon>
        <taxon>Enterobacteriaceae</taxon>
        <taxon>Escherichia</taxon>
    </lineage>
</organism>
<reference key="1">
    <citation type="journal article" date="2007" name="J. Bacteriol.">
        <title>The genome sequence of avian pathogenic Escherichia coli strain O1:K1:H7 shares strong similarities with human extraintestinal pathogenic E. coli genomes.</title>
        <authorList>
            <person name="Johnson T.J."/>
            <person name="Kariyawasam S."/>
            <person name="Wannemuehler Y."/>
            <person name="Mangiamele P."/>
            <person name="Johnson S.J."/>
            <person name="Doetkott C."/>
            <person name="Skyberg J.A."/>
            <person name="Lynne A.M."/>
            <person name="Johnson J.R."/>
            <person name="Nolan L.K."/>
        </authorList>
    </citation>
    <scope>NUCLEOTIDE SEQUENCE [LARGE SCALE GENOMIC DNA]</scope>
</reference>
<gene>
    <name evidence="1" type="primary">argR</name>
    <name type="ordered locus">Ecok1_32260</name>
    <name type="ORF">APECO1_3207</name>
</gene>
<proteinExistence type="inferred from homology"/>
<name>ARGR_ECOK1</name>
<keyword id="KW-0028">Amino-acid biosynthesis</keyword>
<keyword id="KW-0055">Arginine biosynthesis</keyword>
<keyword id="KW-0963">Cytoplasm</keyword>
<keyword id="KW-0238">DNA-binding</keyword>
<keyword id="KW-1185">Reference proteome</keyword>
<keyword id="KW-0678">Repressor</keyword>
<keyword id="KW-0804">Transcription</keyword>
<keyword id="KW-0805">Transcription regulation</keyword>